<proteinExistence type="inferred from homology"/>
<organism>
    <name type="scientific">Chlorobium chlorochromatii (strain CaD3)</name>
    <dbReference type="NCBI Taxonomy" id="340177"/>
    <lineage>
        <taxon>Bacteria</taxon>
        <taxon>Pseudomonadati</taxon>
        <taxon>Chlorobiota</taxon>
        <taxon>Chlorobiia</taxon>
        <taxon>Chlorobiales</taxon>
        <taxon>Chlorobiaceae</taxon>
        <taxon>Chlorobium/Pelodictyon group</taxon>
        <taxon>Chlorobium</taxon>
    </lineage>
</organism>
<comment type="similarity">
    <text evidence="1">Belongs to the bacterial ribosomal protein bL36 family.</text>
</comment>
<name>RL36_CHLCH</name>
<evidence type="ECO:0000255" key="1">
    <source>
        <dbReference type="HAMAP-Rule" id="MF_00251"/>
    </source>
</evidence>
<evidence type="ECO:0000305" key="2"/>
<accession>Q3APJ6</accession>
<protein>
    <recommendedName>
        <fullName evidence="1">Large ribosomal subunit protein bL36</fullName>
    </recommendedName>
    <alternativeName>
        <fullName evidence="2">50S ribosomal protein L36</fullName>
    </alternativeName>
</protein>
<gene>
    <name evidence="1" type="primary">rpmJ</name>
    <name type="ordered locus">Cag_1828</name>
</gene>
<keyword id="KW-0687">Ribonucleoprotein</keyword>
<keyword id="KW-0689">Ribosomal protein</keyword>
<sequence>MKIYSSIKKRCEHCRIVKRKGKRYVICKVNPSHKQRQG</sequence>
<feature type="chain" id="PRO_0000302181" description="Large ribosomal subunit protein bL36">
    <location>
        <begin position="1"/>
        <end position="38"/>
    </location>
</feature>
<dbReference type="EMBL" id="CP000108">
    <property type="protein sequence ID" value="ABB29079.1"/>
    <property type="molecule type" value="Genomic_DNA"/>
</dbReference>
<dbReference type="SMR" id="Q3APJ6"/>
<dbReference type="STRING" id="340177.Cag_1828"/>
<dbReference type="KEGG" id="cch:Cag_1828"/>
<dbReference type="eggNOG" id="COG0257">
    <property type="taxonomic scope" value="Bacteria"/>
</dbReference>
<dbReference type="HOGENOM" id="CLU_135723_6_2_10"/>
<dbReference type="OrthoDB" id="9801558at2"/>
<dbReference type="GO" id="GO:1990904">
    <property type="term" value="C:ribonucleoprotein complex"/>
    <property type="evidence" value="ECO:0007669"/>
    <property type="project" value="UniProtKB-KW"/>
</dbReference>
<dbReference type="GO" id="GO:0005840">
    <property type="term" value="C:ribosome"/>
    <property type="evidence" value="ECO:0007669"/>
    <property type="project" value="UniProtKB-KW"/>
</dbReference>
<dbReference type="GO" id="GO:0003735">
    <property type="term" value="F:structural constituent of ribosome"/>
    <property type="evidence" value="ECO:0007669"/>
    <property type="project" value="InterPro"/>
</dbReference>
<dbReference type="GO" id="GO:0006412">
    <property type="term" value="P:translation"/>
    <property type="evidence" value="ECO:0007669"/>
    <property type="project" value="UniProtKB-UniRule"/>
</dbReference>
<dbReference type="HAMAP" id="MF_00251">
    <property type="entry name" value="Ribosomal_bL36"/>
    <property type="match status" value="1"/>
</dbReference>
<dbReference type="InterPro" id="IPR000473">
    <property type="entry name" value="Ribosomal_bL36"/>
</dbReference>
<dbReference type="InterPro" id="IPR035977">
    <property type="entry name" value="Ribosomal_bL36_sp"/>
</dbReference>
<dbReference type="InterPro" id="IPR052010">
    <property type="entry name" value="Ribosomal_LSU_bL36"/>
</dbReference>
<dbReference type="NCBIfam" id="TIGR01022">
    <property type="entry name" value="rpmJ_bact"/>
    <property type="match status" value="1"/>
</dbReference>
<dbReference type="PANTHER" id="PTHR18804">
    <property type="entry name" value="RIBOSOMAL PROTEIN"/>
    <property type="match status" value="1"/>
</dbReference>
<dbReference type="PANTHER" id="PTHR18804:SF16">
    <property type="entry name" value="RIBOSOMAL PROTEIN"/>
    <property type="match status" value="1"/>
</dbReference>
<dbReference type="Pfam" id="PF00444">
    <property type="entry name" value="Ribosomal_L36"/>
    <property type="match status" value="1"/>
</dbReference>
<dbReference type="SUPFAM" id="SSF57840">
    <property type="entry name" value="Ribosomal protein L36"/>
    <property type="match status" value="1"/>
</dbReference>
<dbReference type="PROSITE" id="PS00828">
    <property type="entry name" value="RIBOSOMAL_L36"/>
    <property type="match status" value="1"/>
</dbReference>
<reference key="1">
    <citation type="submission" date="2005-08" db="EMBL/GenBank/DDBJ databases">
        <title>Complete sequence of Chlorobium chlorochromatii CaD3.</title>
        <authorList>
            <consortium name="US DOE Joint Genome Institute"/>
            <person name="Copeland A."/>
            <person name="Lucas S."/>
            <person name="Lapidus A."/>
            <person name="Barry K."/>
            <person name="Detter J.C."/>
            <person name="Glavina T."/>
            <person name="Hammon N."/>
            <person name="Israni S."/>
            <person name="Pitluck S."/>
            <person name="Bryant D."/>
            <person name="Schmutz J."/>
            <person name="Larimer F."/>
            <person name="Land M."/>
            <person name="Kyrpides N."/>
            <person name="Ivanova N."/>
            <person name="Richardson P."/>
        </authorList>
    </citation>
    <scope>NUCLEOTIDE SEQUENCE [LARGE SCALE GENOMIC DNA]</scope>
    <source>
        <strain>CaD3</strain>
    </source>
</reference>